<feature type="chain" id="PRO_1000055609" description="Large ribosomal subunit protein uL14">
    <location>
        <begin position="1"/>
        <end position="122"/>
    </location>
</feature>
<organism>
    <name type="scientific">Lactococcus lactis subsp. cremoris (strain MG1363)</name>
    <dbReference type="NCBI Taxonomy" id="416870"/>
    <lineage>
        <taxon>Bacteria</taxon>
        <taxon>Bacillati</taxon>
        <taxon>Bacillota</taxon>
        <taxon>Bacilli</taxon>
        <taxon>Lactobacillales</taxon>
        <taxon>Streptococcaceae</taxon>
        <taxon>Lactococcus</taxon>
        <taxon>Lactococcus cremoris subsp. cremoris</taxon>
    </lineage>
</organism>
<proteinExistence type="evidence at protein level"/>
<dbReference type="EMBL" id="AM406671">
    <property type="protein sequence ID" value="CAL98936.1"/>
    <property type="molecule type" value="Genomic_DNA"/>
</dbReference>
<dbReference type="RefSeq" id="WP_003129953.1">
    <property type="nucleotide sequence ID" value="NZ_WJVF01000005.1"/>
</dbReference>
<dbReference type="PDB" id="5MYJ">
    <property type="method" value="EM"/>
    <property type="resolution" value="5.60 A"/>
    <property type="chains" value="BN=1-122"/>
</dbReference>
<dbReference type="PDBsum" id="5MYJ"/>
<dbReference type="EMDB" id="EMD-3581"/>
<dbReference type="SMR" id="A2RNP5"/>
<dbReference type="STRING" id="416870.llmg_2373"/>
<dbReference type="GeneID" id="89634436"/>
<dbReference type="KEGG" id="llm:llmg_2373"/>
<dbReference type="eggNOG" id="COG0093">
    <property type="taxonomic scope" value="Bacteria"/>
</dbReference>
<dbReference type="HOGENOM" id="CLU_095071_2_1_9"/>
<dbReference type="OrthoDB" id="9806379at2"/>
<dbReference type="PhylomeDB" id="A2RNP5"/>
<dbReference type="Proteomes" id="UP000000364">
    <property type="component" value="Chromosome"/>
</dbReference>
<dbReference type="GO" id="GO:0022625">
    <property type="term" value="C:cytosolic large ribosomal subunit"/>
    <property type="evidence" value="ECO:0007669"/>
    <property type="project" value="TreeGrafter"/>
</dbReference>
<dbReference type="GO" id="GO:0070180">
    <property type="term" value="F:large ribosomal subunit rRNA binding"/>
    <property type="evidence" value="ECO:0007669"/>
    <property type="project" value="TreeGrafter"/>
</dbReference>
<dbReference type="GO" id="GO:0003735">
    <property type="term" value="F:structural constituent of ribosome"/>
    <property type="evidence" value="ECO:0007669"/>
    <property type="project" value="InterPro"/>
</dbReference>
<dbReference type="GO" id="GO:0006412">
    <property type="term" value="P:translation"/>
    <property type="evidence" value="ECO:0007669"/>
    <property type="project" value="UniProtKB-UniRule"/>
</dbReference>
<dbReference type="CDD" id="cd00337">
    <property type="entry name" value="Ribosomal_uL14"/>
    <property type="match status" value="1"/>
</dbReference>
<dbReference type="FunFam" id="2.40.150.20:FF:000001">
    <property type="entry name" value="50S ribosomal protein L14"/>
    <property type="match status" value="1"/>
</dbReference>
<dbReference type="Gene3D" id="2.40.150.20">
    <property type="entry name" value="Ribosomal protein L14"/>
    <property type="match status" value="1"/>
</dbReference>
<dbReference type="HAMAP" id="MF_01367">
    <property type="entry name" value="Ribosomal_uL14"/>
    <property type="match status" value="1"/>
</dbReference>
<dbReference type="InterPro" id="IPR000218">
    <property type="entry name" value="Ribosomal_uL14"/>
</dbReference>
<dbReference type="InterPro" id="IPR005745">
    <property type="entry name" value="Ribosomal_uL14_bac-type"/>
</dbReference>
<dbReference type="InterPro" id="IPR019972">
    <property type="entry name" value="Ribosomal_uL14_CS"/>
</dbReference>
<dbReference type="InterPro" id="IPR036853">
    <property type="entry name" value="Ribosomal_uL14_sf"/>
</dbReference>
<dbReference type="NCBIfam" id="TIGR01067">
    <property type="entry name" value="rplN_bact"/>
    <property type="match status" value="1"/>
</dbReference>
<dbReference type="PANTHER" id="PTHR11761">
    <property type="entry name" value="50S/60S RIBOSOMAL PROTEIN L14/L23"/>
    <property type="match status" value="1"/>
</dbReference>
<dbReference type="PANTHER" id="PTHR11761:SF3">
    <property type="entry name" value="LARGE RIBOSOMAL SUBUNIT PROTEIN UL14M"/>
    <property type="match status" value="1"/>
</dbReference>
<dbReference type="Pfam" id="PF00238">
    <property type="entry name" value="Ribosomal_L14"/>
    <property type="match status" value="1"/>
</dbReference>
<dbReference type="SMART" id="SM01374">
    <property type="entry name" value="Ribosomal_L14"/>
    <property type="match status" value="1"/>
</dbReference>
<dbReference type="SUPFAM" id="SSF50193">
    <property type="entry name" value="Ribosomal protein L14"/>
    <property type="match status" value="1"/>
</dbReference>
<dbReference type="PROSITE" id="PS00049">
    <property type="entry name" value="RIBOSOMAL_L14"/>
    <property type="match status" value="1"/>
</dbReference>
<protein>
    <recommendedName>
        <fullName evidence="1">Large ribosomal subunit protein uL14</fullName>
    </recommendedName>
    <alternativeName>
        <fullName evidence="2">50S ribosomal protein L14</fullName>
    </alternativeName>
</protein>
<evidence type="ECO:0000255" key="1">
    <source>
        <dbReference type="HAMAP-Rule" id="MF_01367"/>
    </source>
</evidence>
<evidence type="ECO:0000305" key="2"/>
<comment type="function">
    <text evidence="1">Binds to 23S rRNA. Forms part of two intersubunit bridges in the 70S ribosome.</text>
</comment>
<comment type="subunit">
    <text evidence="1">Part of the 50S ribosomal subunit. Forms a cluster with proteins L3 and L19. In the 70S ribosome, L14 and L19 interact and together make contacts with the 16S rRNA in bridges B5 and B8.</text>
</comment>
<comment type="similarity">
    <text evidence="1">Belongs to the universal ribosomal protein uL14 family.</text>
</comment>
<gene>
    <name evidence="1" type="primary">rplN</name>
    <name type="ordered locus">llmg_2373</name>
</gene>
<sequence>MIQTESRLKVADNSGAKELLTIRVLGGSSRKFAGIGDIVVATVKSAAPGGAVKKGEVVKAVIVRTKSGAKRPDGSYIKFDENAAVLIRDDKTPRGTRIFGPVARELREGGYMKIVSLAPEVL</sequence>
<name>RL14_LACLM</name>
<keyword id="KW-0002">3D-structure</keyword>
<keyword id="KW-0687">Ribonucleoprotein</keyword>
<keyword id="KW-0689">Ribosomal protein</keyword>
<keyword id="KW-0694">RNA-binding</keyword>
<keyword id="KW-0699">rRNA-binding</keyword>
<reference key="1">
    <citation type="journal article" date="2007" name="J. Bacteriol.">
        <title>The complete genome sequence of the lactic acid bacterial paradigm Lactococcus lactis subsp. cremoris MG1363.</title>
        <authorList>
            <person name="Wegmann U."/>
            <person name="O'Connell-Motherway M."/>
            <person name="Zomer A."/>
            <person name="Buist G."/>
            <person name="Shearman C."/>
            <person name="Canchaya C."/>
            <person name="Ventura M."/>
            <person name="Goesmann A."/>
            <person name="Gasson M.J."/>
            <person name="Kuipers O.P."/>
            <person name="van Sinderen D."/>
            <person name="Kok J."/>
        </authorList>
    </citation>
    <scope>NUCLEOTIDE SEQUENCE [LARGE SCALE GENOMIC DNA]</scope>
    <source>
        <strain>MG1363</strain>
    </source>
</reference>
<accession>A2RNP5</accession>